<keyword id="KW-0963">Cytoplasm</keyword>
<keyword id="KW-0489">Methyltransferase</keyword>
<keyword id="KW-0698">rRNA processing</keyword>
<keyword id="KW-0949">S-adenosyl-L-methionine</keyword>
<keyword id="KW-0808">Transferase</keyword>
<reference key="1">
    <citation type="journal article" date="2006" name="J. Bacteriol.">
        <title>Complete genome sequence of Yersinia pestis strains Antiqua and Nepal516: evidence of gene reduction in an emerging pathogen.</title>
        <authorList>
            <person name="Chain P.S.G."/>
            <person name="Hu P."/>
            <person name="Malfatti S.A."/>
            <person name="Radnedge L."/>
            <person name="Larimer F."/>
            <person name="Vergez L.M."/>
            <person name="Worsham P."/>
            <person name="Chu M.C."/>
            <person name="Andersen G.L."/>
        </authorList>
    </citation>
    <scope>NUCLEOTIDE SEQUENCE [LARGE SCALE GENOMIC DNA]</scope>
    <source>
        <strain>Nepal516</strain>
    </source>
</reference>
<reference key="2">
    <citation type="submission" date="2009-04" db="EMBL/GenBank/DDBJ databases">
        <title>Yersinia pestis Nepal516A whole genome shotgun sequencing project.</title>
        <authorList>
            <person name="Plunkett G. III"/>
            <person name="Anderson B.D."/>
            <person name="Baumler D.J."/>
            <person name="Burland V."/>
            <person name="Cabot E.L."/>
            <person name="Glasner J.D."/>
            <person name="Mau B."/>
            <person name="Neeno-Eckwall E."/>
            <person name="Perna N.T."/>
            <person name="Munk A.C."/>
            <person name="Tapia R."/>
            <person name="Green L.D."/>
            <person name="Rogers Y.C."/>
            <person name="Detter J.C."/>
            <person name="Bruce D.C."/>
            <person name="Brettin T.S."/>
        </authorList>
    </citation>
    <scope>NUCLEOTIDE SEQUENCE [LARGE SCALE GENOMIC DNA]</scope>
    <source>
        <strain>Nepal516</strain>
    </source>
</reference>
<sequence length="336" mass="37477">MLSYAPENAYQRASTMENKKVFPKEKSGLHPRNRHCSRYDFDALSVSCPELIPFLAPTAYGDISVDFADPLAVKMLNKALLKHFYGIEYWDIPADSLCPPIPGRADYVHHLADLLASCNGEVIPKGKNIALLDIGVGANCIYPIIGQREYGWRFTGTDIDSHALSAAKMVVSMNPTLKNTLRLKQQKDPHAIFEGVWAVNERYDATLCNPPFHGSAEEAAATTRRKLHKLGKNEVAAKPVQNFGGKNSELWCEGGEEGFVSRMVAESVAKAQNCFWFTSLISKKTTLPAIYHALRYVKAVEVRTIEMAQGQKVSRFVAWTFLTPEQQAAWVAERWA</sequence>
<gene>
    <name evidence="1" type="primary">rlmF</name>
    <name type="ordered locus">YPN_2114</name>
    <name type="ORF">YP516_2356</name>
</gene>
<comment type="function">
    <text evidence="1">Specifically methylates the adenine in position 1618 of 23S rRNA.</text>
</comment>
<comment type="catalytic activity">
    <reaction evidence="1">
        <text>adenosine(1618) in 23S rRNA + S-adenosyl-L-methionine = N(6)-methyladenosine(1618) in 23S rRNA + S-adenosyl-L-homocysteine + H(+)</text>
        <dbReference type="Rhea" id="RHEA:16497"/>
        <dbReference type="Rhea" id="RHEA-COMP:10229"/>
        <dbReference type="Rhea" id="RHEA-COMP:10231"/>
        <dbReference type="ChEBI" id="CHEBI:15378"/>
        <dbReference type="ChEBI" id="CHEBI:57856"/>
        <dbReference type="ChEBI" id="CHEBI:59789"/>
        <dbReference type="ChEBI" id="CHEBI:74411"/>
        <dbReference type="ChEBI" id="CHEBI:74449"/>
        <dbReference type="EC" id="2.1.1.181"/>
    </reaction>
</comment>
<comment type="subcellular location">
    <subcellularLocation>
        <location evidence="1">Cytoplasm</location>
    </subcellularLocation>
</comment>
<comment type="similarity">
    <text evidence="1">Belongs to the methyltransferase superfamily. METTL16/RlmF family.</text>
</comment>
<dbReference type="EC" id="2.1.1.181" evidence="1"/>
<dbReference type="EMBL" id="CP000305">
    <property type="protein sequence ID" value="ABG18443.1"/>
    <property type="molecule type" value="Genomic_DNA"/>
</dbReference>
<dbReference type="EMBL" id="ACNQ01000013">
    <property type="protein sequence ID" value="EEO76159.1"/>
    <property type="molecule type" value="Genomic_DNA"/>
</dbReference>
<dbReference type="SMR" id="Q1CHT7"/>
<dbReference type="KEGG" id="ypn:YPN_2114"/>
<dbReference type="HOGENOM" id="CLU_027534_3_0_6"/>
<dbReference type="Proteomes" id="UP000008936">
    <property type="component" value="Chromosome"/>
</dbReference>
<dbReference type="GO" id="GO:0005737">
    <property type="term" value="C:cytoplasm"/>
    <property type="evidence" value="ECO:0007669"/>
    <property type="project" value="UniProtKB-SubCell"/>
</dbReference>
<dbReference type="GO" id="GO:0052907">
    <property type="term" value="F:23S rRNA (adenine(1618)-N(6))-methyltransferase activity"/>
    <property type="evidence" value="ECO:0007669"/>
    <property type="project" value="UniProtKB-EC"/>
</dbReference>
<dbReference type="GO" id="GO:0070475">
    <property type="term" value="P:rRNA base methylation"/>
    <property type="evidence" value="ECO:0007669"/>
    <property type="project" value="TreeGrafter"/>
</dbReference>
<dbReference type="CDD" id="cd02440">
    <property type="entry name" value="AdoMet_MTases"/>
    <property type="match status" value="1"/>
</dbReference>
<dbReference type="FunFam" id="3.40.50.150:FF:000045">
    <property type="entry name" value="Ribosomal RNA large subunit methyltransferase F"/>
    <property type="match status" value="1"/>
</dbReference>
<dbReference type="Gene3D" id="3.40.50.150">
    <property type="entry name" value="Vaccinia Virus protein VP39"/>
    <property type="match status" value="1"/>
</dbReference>
<dbReference type="HAMAP" id="MF_01848">
    <property type="entry name" value="23SrRNA_methyltr_F"/>
    <property type="match status" value="1"/>
</dbReference>
<dbReference type="InterPro" id="IPR010286">
    <property type="entry name" value="METTL16/RlmF"/>
</dbReference>
<dbReference type="InterPro" id="IPR016909">
    <property type="entry name" value="rRNA_lsu_MeTfrase_F"/>
</dbReference>
<dbReference type="InterPro" id="IPR029063">
    <property type="entry name" value="SAM-dependent_MTases_sf"/>
</dbReference>
<dbReference type="NCBIfam" id="NF008725">
    <property type="entry name" value="PRK11727.1"/>
    <property type="match status" value="1"/>
</dbReference>
<dbReference type="PANTHER" id="PTHR13393:SF0">
    <property type="entry name" value="RNA N6-ADENOSINE-METHYLTRANSFERASE METTL16"/>
    <property type="match status" value="1"/>
</dbReference>
<dbReference type="PANTHER" id="PTHR13393">
    <property type="entry name" value="SAM-DEPENDENT METHYLTRANSFERASE"/>
    <property type="match status" value="1"/>
</dbReference>
<dbReference type="Pfam" id="PF05971">
    <property type="entry name" value="Methyltransf_10"/>
    <property type="match status" value="1"/>
</dbReference>
<dbReference type="PIRSF" id="PIRSF029038">
    <property type="entry name" value="Mtase_YbiN_prd"/>
    <property type="match status" value="1"/>
</dbReference>
<dbReference type="SUPFAM" id="SSF53335">
    <property type="entry name" value="S-adenosyl-L-methionine-dependent methyltransferases"/>
    <property type="match status" value="1"/>
</dbReference>
<name>RLMF_YERPN</name>
<accession>Q1CHT7</accession>
<accession>C4GV31</accession>
<feature type="chain" id="PRO_0000349985" description="Ribosomal RNA large subunit methyltransferase F">
    <location>
        <begin position="1"/>
        <end position="336"/>
    </location>
</feature>
<organism>
    <name type="scientific">Yersinia pestis bv. Antiqua (strain Nepal516)</name>
    <dbReference type="NCBI Taxonomy" id="377628"/>
    <lineage>
        <taxon>Bacteria</taxon>
        <taxon>Pseudomonadati</taxon>
        <taxon>Pseudomonadota</taxon>
        <taxon>Gammaproteobacteria</taxon>
        <taxon>Enterobacterales</taxon>
        <taxon>Yersiniaceae</taxon>
        <taxon>Yersinia</taxon>
    </lineage>
</organism>
<evidence type="ECO:0000255" key="1">
    <source>
        <dbReference type="HAMAP-Rule" id="MF_01848"/>
    </source>
</evidence>
<proteinExistence type="inferred from homology"/>
<protein>
    <recommendedName>
        <fullName evidence="1">Ribosomal RNA large subunit methyltransferase F</fullName>
        <ecNumber evidence="1">2.1.1.181</ecNumber>
    </recommendedName>
    <alternativeName>
        <fullName evidence="1">23S rRNA mA1618 methyltransferase</fullName>
    </alternativeName>
    <alternativeName>
        <fullName evidence="1">rRNA adenine N-6-methyltransferase</fullName>
    </alternativeName>
</protein>